<evidence type="ECO:0000269" key="1">
    <source>
    </source>
</evidence>
<evidence type="ECO:0000303" key="2">
    <source>
    </source>
</evidence>
<evidence type="ECO:0000305" key="3"/>
<evidence type="ECO:0000305" key="4">
    <source>
    </source>
</evidence>
<feature type="peptide" id="PRO_0000443431" description="Brevinin-1GRa" evidence="1">
    <location>
        <begin position="1"/>
        <end position="24"/>
    </location>
</feature>
<sequence>FLPLLAGLAANFLPKIFCKITKKC</sequence>
<organism evidence="2">
    <name type="scientific">Odorrana grahami</name>
    <name type="common">Yunnanfu frog</name>
    <name type="synonym">Rana grahami</name>
    <dbReference type="NCBI Taxonomy" id="167935"/>
    <lineage>
        <taxon>Eukaryota</taxon>
        <taxon>Metazoa</taxon>
        <taxon>Chordata</taxon>
        <taxon>Craniata</taxon>
        <taxon>Vertebrata</taxon>
        <taxon>Euteleostomi</taxon>
        <taxon>Amphibia</taxon>
        <taxon>Batrachia</taxon>
        <taxon>Anura</taxon>
        <taxon>Neobatrachia</taxon>
        <taxon>Ranoidea</taxon>
        <taxon>Ranidae</taxon>
        <taxon>Odorrana</taxon>
    </lineage>
</organism>
<reference evidence="3" key="1">
    <citation type="journal article" date="2006" name="Peptides">
        <title>Antimicrobial peptides from diverse families isolated from the skin of the Asian frog, Rana grahami.</title>
        <authorList>
            <person name="Conlon J.M."/>
            <person name="Al-Ghaferi N."/>
            <person name="Abraham B."/>
            <person name="Jiansheng H."/>
            <person name="Cosette P."/>
            <person name="Leprince J."/>
            <person name="Jouenne T."/>
            <person name="Vaudry H."/>
        </authorList>
    </citation>
    <scope>PROTEIN SEQUENCE</scope>
    <scope>FUNCTION</scope>
    <scope>MASS SPECTROMETRY</scope>
    <scope>SUBCELLULAR LOCATION</scope>
    <source>
        <tissue evidence="2">Skin</tissue>
    </source>
</reference>
<keyword id="KW-0044">Antibiotic</keyword>
<keyword id="KW-0929">Antimicrobial</keyword>
<keyword id="KW-0903">Direct protein sequencing</keyword>
<keyword id="KW-0964">Secreted</keyword>
<comment type="function">
    <text evidence="1">Antimicrobial peptide active against the Gram-positive bacterium S.aureus (MIC=12.5 uM) and against the Gram-negative bacteria E.coli (MIC=25 uM).</text>
</comment>
<comment type="subcellular location">
    <subcellularLocation>
        <location evidence="1">Secreted</location>
    </subcellularLocation>
</comment>
<comment type="tissue specificity">
    <text evidence="4">Expressed by the skin glands.</text>
</comment>
<comment type="mass spectrometry"/>
<comment type="similarity">
    <text evidence="3">Belongs to the frog skin active peptide (FSAP) family. Brevinin subfamily.</text>
</comment>
<name>BR1A_ODOGR</name>
<dbReference type="GO" id="GO:0005576">
    <property type="term" value="C:extracellular region"/>
    <property type="evidence" value="ECO:0007669"/>
    <property type="project" value="UniProtKB-SubCell"/>
</dbReference>
<dbReference type="GO" id="GO:0050829">
    <property type="term" value="P:defense response to Gram-negative bacterium"/>
    <property type="evidence" value="ECO:0000314"/>
    <property type="project" value="UniProtKB"/>
</dbReference>
<dbReference type="GO" id="GO:0050830">
    <property type="term" value="P:defense response to Gram-positive bacterium"/>
    <property type="evidence" value="ECO:0000314"/>
    <property type="project" value="UniProtKB"/>
</dbReference>
<dbReference type="GO" id="GO:0031640">
    <property type="term" value="P:killing of cells of another organism"/>
    <property type="evidence" value="ECO:0000314"/>
    <property type="project" value="UniProtKB"/>
</dbReference>
<dbReference type="InterPro" id="IPR012520">
    <property type="entry name" value="Antimicrobial_frog_1"/>
</dbReference>
<dbReference type="Pfam" id="PF08018">
    <property type="entry name" value="Antimicrobial_1"/>
    <property type="match status" value="1"/>
</dbReference>
<protein>
    <recommendedName>
        <fullName evidence="2">Brevinin-1GRa</fullName>
    </recommendedName>
</protein>
<accession>C0HL72</accession>
<proteinExistence type="evidence at protein level"/>